<sequence length="17" mass="2076">QGPWMEEEEAAYGWMDF</sequence>
<evidence type="ECO:0000250" key="1"/>
<evidence type="ECO:0000250" key="2">
    <source>
        <dbReference type="UniProtKB" id="P01350"/>
    </source>
</evidence>
<evidence type="ECO:0000305" key="3"/>
<feature type="peptide" id="PRO_0000043890" description="Gastrin">
    <location>
        <begin position="1"/>
        <end position="17"/>
    </location>
</feature>
<feature type="modified residue" description="Pyrrolidone carboxylic acid" evidence="2">
    <location>
        <position position="1"/>
    </location>
</feature>
<feature type="modified residue" description="Sulfotyrosine" evidence="1">
    <location>
        <position position="12"/>
    </location>
</feature>
<feature type="modified residue" description="Phenylalanine amide" evidence="1">
    <location>
        <position position="17"/>
    </location>
</feature>
<proteinExistence type="evidence at protein level"/>
<protein>
    <recommendedName>
        <fullName>Gastrin</fullName>
    </recommendedName>
</protein>
<comment type="function">
    <text>Gastrin stimulates the stomach mucosa to produce and secrete hydrochloric acid and the pancreas to secrete its digestive enzymes. It also stimulates smooth muscle contraction and increases blood circulation and water secretion in the stomach and intestine.</text>
</comment>
<comment type="subcellular location">
    <subcellularLocation>
        <location>Secreted</location>
    </subcellularLocation>
</comment>
<comment type="PTM">
    <text evidence="1">Sulfation enhances proteolytic processing, and blocks peptide degradation. Levels of sulfation differ between proteolytically-cleaved gastrins and between tissues (By similarity).</text>
</comment>
<comment type="similarity">
    <text evidence="3">Belongs to the gastrin/cholecystokinin family.</text>
</comment>
<reference key="1">
    <citation type="journal article" date="1991" name="Regul. Pept.">
        <title>Rhesus monkey gastroenteropancreatic hormones: relationship to human sequences.</title>
        <authorList>
            <person name="Yu J.-H."/>
            <person name="Xin Y."/>
            <person name="Eng J."/>
            <person name="Yalow R.S."/>
        </authorList>
    </citation>
    <scope>PROTEIN SEQUENCE</scope>
</reference>
<accession>P33714</accession>
<gene>
    <name type="primary">GAST</name>
    <name type="synonym">GAS</name>
</gene>
<dbReference type="PIR" id="A60071">
    <property type="entry name" value="A60071"/>
</dbReference>
<dbReference type="STRING" id="9544.ENSMMUP00000072182"/>
<dbReference type="PaxDb" id="9544-ENSMMUP00000024644"/>
<dbReference type="eggNOG" id="ENOG502SA9S">
    <property type="taxonomic scope" value="Eukaryota"/>
</dbReference>
<dbReference type="HOGENOM" id="CLU_2249245_0_0_1"/>
<dbReference type="InParanoid" id="P33714"/>
<dbReference type="Proteomes" id="UP000006718">
    <property type="component" value="Unassembled WGS sequence"/>
</dbReference>
<dbReference type="GO" id="GO:0005615">
    <property type="term" value="C:extracellular space"/>
    <property type="evidence" value="ECO:0000250"/>
    <property type="project" value="AgBase"/>
</dbReference>
<dbReference type="GO" id="GO:0005179">
    <property type="term" value="F:hormone activity"/>
    <property type="evidence" value="ECO:0007669"/>
    <property type="project" value="UniProtKB-KW"/>
</dbReference>
<dbReference type="GO" id="GO:0032094">
    <property type="term" value="P:response to food"/>
    <property type="evidence" value="ECO:0000250"/>
    <property type="project" value="AgBase"/>
</dbReference>
<dbReference type="InterPro" id="IPR013152">
    <property type="entry name" value="Gastrin/cholecystokinin_CS"/>
</dbReference>
<dbReference type="PROSITE" id="PS00259">
    <property type="entry name" value="GASTRIN"/>
    <property type="match status" value="1"/>
</dbReference>
<name>GAST_MACMU</name>
<keyword id="KW-0027">Amidation</keyword>
<keyword id="KW-0903">Direct protein sequencing</keyword>
<keyword id="KW-0372">Hormone</keyword>
<keyword id="KW-0873">Pyrrolidone carboxylic acid</keyword>
<keyword id="KW-1185">Reference proteome</keyword>
<keyword id="KW-0964">Secreted</keyword>
<keyword id="KW-0765">Sulfation</keyword>
<organism>
    <name type="scientific">Macaca mulatta</name>
    <name type="common">Rhesus macaque</name>
    <dbReference type="NCBI Taxonomy" id="9544"/>
    <lineage>
        <taxon>Eukaryota</taxon>
        <taxon>Metazoa</taxon>
        <taxon>Chordata</taxon>
        <taxon>Craniata</taxon>
        <taxon>Vertebrata</taxon>
        <taxon>Euteleostomi</taxon>
        <taxon>Mammalia</taxon>
        <taxon>Eutheria</taxon>
        <taxon>Euarchontoglires</taxon>
        <taxon>Primates</taxon>
        <taxon>Haplorrhini</taxon>
        <taxon>Catarrhini</taxon>
        <taxon>Cercopithecidae</taxon>
        <taxon>Cercopithecinae</taxon>
        <taxon>Macaca</taxon>
    </lineage>
</organism>